<evidence type="ECO:0000255" key="1">
    <source>
        <dbReference type="PROSITE-ProRule" id="PRU00798"/>
    </source>
</evidence>
<name>IOVO_TRACA</name>
<sequence length="56" mass="6039">LAAVSVDCSEYPKPACTMEYRPLCGSDNKTYGNKCNFCNAVVESNGTLTLSHFGKC</sequence>
<organism>
    <name type="scientific">Tragopan caboti</name>
    <name type="common">Cabot's tragopan pheasant</name>
    <dbReference type="NCBI Taxonomy" id="30407"/>
    <lineage>
        <taxon>Eukaryota</taxon>
        <taxon>Metazoa</taxon>
        <taxon>Chordata</taxon>
        <taxon>Craniata</taxon>
        <taxon>Vertebrata</taxon>
        <taxon>Euteleostomi</taxon>
        <taxon>Archelosauria</taxon>
        <taxon>Archosauria</taxon>
        <taxon>Dinosauria</taxon>
        <taxon>Saurischia</taxon>
        <taxon>Theropoda</taxon>
        <taxon>Coelurosauria</taxon>
        <taxon>Aves</taxon>
        <taxon>Neognathae</taxon>
        <taxon>Galloanserae</taxon>
        <taxon>Galliformes</taxon>
        <taxon>Phasianidae</taxon>
        <taxon>Phasianinae</taxon>
        <taxon>Tragopan</taxon>
    </lineage>
</organism>
<protein>
    <recommendedName>
        <fullName>Ovomucoid</fullName>
    </recommendedName>
</protein>
<dbReference type="PIR" id="E61588">
    <property type="entry name" value="E61588"/>
</dbReference>
<dbReference type="SMR" id="P67947"/>
<dbReference type="GO" id="GO:0005615">
    <property type="term" value="C:extracellular space"/>
    <property type="evidence" value="ECO:0007669"/>
    <property type="project" value="UniProtKB-ARBA"/>
</dbReference>
<dbReference type="GO" id="GO:0004867">
    <property type="term" value="F:serine-type endopeptidase inhibitor activity"/>
    <property type="evidence" value="ECO:0007669"/>
    <property type="project" value="UniProtKB-KW"/>
</dbReference>
<dbReference type="CDD" id="cd00104">
    <property type="entry name" value="KAZAL_FS"/>
    <property type="match status" value="1"/>
</dbReference>
<dbReference type="FunFam" id="3.30.60.30:FF:000037">
    <property type="entry name" value="Ovomucoid"/>
    <property type="match status" value="1"/>
</dbReference>
<dbReference type="Gene3D" id="3.30.60.30">
    <property type="match status" value="1"/>
</dbReference>
<dbReference type="InterPro" id="IPR051597">
    <property type="entry name" value="Bifunctional_prot_inhibitor"/>
</dbReference>
<dbReference type="InterPro" id="IPR002350">
    <property type="entry name" value="Kazal_dom"/>
</dbReference>
<dbReference type="InterPro" id="IPR036058">
    <property type="entry name" value="Kazal_dom_sf"/>
</dbReference>
<dbReference type="InterPro" id="IPR001239">
    <property type="entry name" value="Prot_inh_Kazal-m"/>
</dbReference>
<dbReference type="PANTHER" id="PTHR47729:SF1">
    <property type="entry name" value="OVOMUCOID-LIKE-RELATED"/>
    <property type="match status" value="1"/>
</dbReference>
<dbReference type="PANTHER" id="PTHR47729">
    <property type="entry name" value="SERINE PEPTIDASE INHIBITOR, KAZAL TYPE 2, TANDEM DUPLICATE 1-RELATED"/>
    <property type="match status" value="1"/>
</dbReference>
<dbReference type="Pfam" id="PF00050">
    <property type="entry name" value="Kazal_1"/>
    <property type="match status" value="1"/>
</dbReference>
<dbReference type="PRINTS" id="PR00290">
    <property type="entry name" value="KAZALINHBTR"/>
</dbReference>
<dbReference type="SMART" id="SM00280">
    <property type="entry name" value="KAZAL"/>
    <property type="match status" value="1"/>
</dbReference>
<dbReference type="SUPFAM" id="SSF100895">
    <property type="entry name" value="Kazal-type serine protease inhibitors"/>
    <property type="match status" value="1"/>
</dbReference>
<dbReference type="PROSITE" id="PS00282">
    <property type="entry name" value="KAZAL_1"/>
    <property type="match status" value="1"/>
</dbReference>
<dbReference type="PROSITE" id="PS51465">
    <property type="entry name" value="KAZAL_2"/>
    <property type="match status" value="1"/>
</dbReference>
<accession>P67947</accession>
<accession>P05586</accession>
<reference key="1">
    <citation type="journal article" date="1987" name="Biochemistry">
        <title>Ovomucoid third domains from 100 avian species: isolation, sequences, and hypervariability of enzyme-inhibitor contact residues.</title>
        <authorList>
            <person name="Laskowski M. Jr."/>
            <person name="Kato I."/>
            <person name="Ardelt W."/>
            <person name="Cook J."/>
            <person name="Denton A."/>
            <person name="Empie M.W."/>
            <person name="Kohr W.J."/>
            <person name="Park S.J."/>
            <person name="Parks K."/>
            <person name="Schatzley B.L."/>
            <person name="Schoenberger O.L."/>
            <person name="Tashiro M."/>
            <person name="Vichot G."/>
            <person name="Whatley H.E."/>
            <person name="Wieczorek A."/>
            <person name="Wieczorek M."/>
        </authorList>
    </citation>
    <scope>PROTEIN SEQUENCE</scope>
</reference>
<reference key="2">
    <citation type="journal article" date="1993" name="J. Protein Chem.">
        <title>Amino acid sequences of ovomucoid third domains from 27 additional species of birds.</title>
        <authorList>
            <person name="Apostol I."/>
            <person name="Giletto A."/>
            <person name="Komiyama T."/>
            <person name="Zhang W."/>
            <person name="Laskowski M. Jr."/>
        </authorList>
    </citation>
    <scope>PROTEIN SEQUENCE</scope>
</reference>
<comment type="subcellular location">
    <subcellularLocation>
        <location>Secreted</location>
    </subcellularLocation>
</comment>
<comment type="domain">
    <text>Avian ovomucoid consists of three homologous, tandem Kazal family inhibitory domains.</text>
</comment>
<feature type="chain" id="PRO_0000073188" description="Ovomucoid">
    <location>
        <begin position="1" status="less than"/>
        <end position="56" status="greater than"/>
    </location>
</feature>
<feature type="domain" description="Kazal-like" evidence="1">
    <location>
        <begin position="6"/>
        <end position="56"/>
    </location>
</feature>
<feature type="site" description="Reactive bond 3">
    <location>
        <begin position="18"/>
        <end position="19"/>
    </location>
</feature>
<feature type="glycosylation site" description="N-linked (GlcNAc...) asparagine">
    <location>
        <position position="45"/>
    </location>
</feature>
<feature type="disulfide bond">
    <location>
        <begin position="8"/>
        <end position="38"/>
    </location>
</feature>
<feature type="disulfide bond">
    <location>
        <begin position="16"/>
        <end position="35"/>
    </location>
</feature>
<feature type="disulfide bond">
    <location>
        <begin position="24"/>
        <end position="56"/>
    </location>
</feature>
<feature type="non-terminal residue">
    <location>
        <position position="1"/>
    </location>
</feature>
<feature type="non-terminal residue">
    <location>
        <position position="56"/>
    </location>
</feature>
<proteinExistence type="evidence at protein level"/>
<keyword id="KW-0903">Direct protein sequencing</keyword>
<keyword id="KW-1015">Disulfide bond</keyword>
<keyword id="KW-0325">Glycoprotein</keyword>
<keyword id="KW-0646">Protease inhibitor</keyword>
<keyword id="KW-0677">Repeat</keyword>
<keyword id="KW-0964">Secreted</keyword>
<keyword id="KW-0722">Serine protease inhibitor</keyword>